<reference key="1">
    <citation type="submission" date="2007-12" db="EMBL/GenBank/DDBJ databases">
        <title>Complete sequence of chromosome of Francisella philomiragia subsp. philomiragia ATCC 25017.</title>
        <authorList>
            <consortium name="US DOE Joint Genome Institute"/>
            <person name="Copeland A."/>
            <person name="Lucas S."/>
            <person name="Lapidus A."/>
            <person name="Barry K."/>
            <person name="Detter J.C."/>
            <person name="Glavina del Rio T."/>
            <person name="Hammon N."/>
            <person name="Israni S."/>
            <person name="Dalin E."/>
            <person name="Tice H."/>
            <person name="Pitluck S."/>
            <person name="Chain P."/>
            <person name="Malfatti S."/>
            <person name="Shin M."/>
            <person name="Vergez L."/>
            <person name="Schmutz J."/>
            <person name="Larimer F."/>
            <person name="Land M."/>
            <person name="Hauser L."/>
            <person name="Richardson P."/>
        </authorList>
    </citation>
    <scope>NUCLEOTIDE SEQUENCE [LARGE SCALE GENOMIC DNA]</scope>
    <source>
        <strain>ATCC 25017 / CCUG 19701 / FSC 153 / O#319-036</strain>
    </source>
</reference>
<proteinExistence type="inferred from homology"/>
<protein>
    <recommendedName>
        <fullName evidence="1">4-hydroxy-3-methylbut-2-enyl diphosphate reductase</fullName>
        <shortName evidence="1">HMBPP reductase</shortName>
        <ecNumber evidence="1">1.17.7.4</ecNumber>
    </recommendedName>
</protein>
<gene>
    <name evidence="1" type="primary">ispH</name>
    <name type="ordered locus">Fphi_0475</name>
</gene>
<feature type="chain" id="PRO_1000077516" description="4-hydroxy-3-methylbut-2-enyl diphosphate reductase">
    <location>
        <begin position="1"/>
        <end position="318"/>
    </location>
</feature>
<feature type="active site" description="Proton donor" evidence="1">
    <location>
        <position position="126"/>
    </location>
</feature>
<feature type="binding site" evidence="1">
    <location>
        <position position="12"/>
    </location>
    <ligand>
        <name>[4Fe-4S] cluster</name>
        <dbReference type="ChEBI" id="CHEBI:49883"/>
    </ligand>
</feature>
<feature type="binding site" evidence="1">
    <location>
        <position position="41"/>
    </location>
    <ligand>
        <name>(2E)-4-hydroxy-3-methylbut-2-enyl diphosphate</name>
        <dbReference type="ChEBI" id="CHEBI:128753"/>
    </ligand>
</feature>
<feature type="binding site" evidence="1">
    <location>
        <position position="41"/>
    </location>
    <ligand>
        <name>dimethylallyl diphosphate</name>
        <dbReference type="ChEBI" id="CHEBI:57623"/>
    </ligand>
</feature>
<feature type="binding site" evidence="1">
    <location>
        <position position="41"/>
    </location>
    <ligand>
        <name>isopentenyl diphosphate</name>
        <dbReference type="ChEBI" id="CHEBI:128769"/>
    </ligand>
</feature>
<feature type="binding site" evidence="1">
    <location>
        <position position="74"/>
    </location>
    <ligand>
        <name>(2E)-4-hydroxy-3-methylbut-2-enyl diphosphate</name>
        <dbReference type="ChEBI" id="CHEBI:128753"/>
    </ligand>
</feature>
<feature type="binding site" evidence="1">
    <location>
        <position position="74"/>
    </location>
    <ligand>
        <name>dimethylallyl diphosphate</name>
        <dbReference type="ChEBI" id="CHEBI:57623"/>
    </ligand>
</feature>
<feature type="binding site" evidence="1">
    <location>
        <position position="74"/>
    </location>
    <ligand>
        <name>isopentenyl diphosphate</name>
        <dbReference type="ChEBI" id="CHEBI:128769"/>
    </ligand>
</feature>
<feature type="binding site" evidence="1">
    <location>
        <position position="96"/>
    </location>
    <ligand>
        <name>[4Fe-4S] cluster</name>
        <dbReference type="ChEBI" id="CHEBI:49883"/>
    </ligand>
</feature>
<feature type="binding site" evidence="1">
    <location>
        <position position="124"/>
    </location>
    <ligand>
        <name>(2E)-4-hydroxy-3-methylbut-2-enyl diphosphate</name>
        <dbReference type="ChEBI" id="CHEBI:128753"/>
    </ligand>
</feature>
<feature type="binding site" evidence="1">
    <location>
        <position position="124"/>
    </location>
    <ligand>
        <name>dimethylallyl diphosphate</name>
        <dbReference type="ChEBI" id="CHEBI:57623"/>
    </ligand>
</feature>
<feature type="binding site" evidence="1">
    <location>
        <position position="124"/>
    </location>
    <ligand>
        <name>isopentenyl diphosphate</name>
        <dbReference type="ChEBI" id="CHEBI:128769"/>
    </ligand>
</feature>
<feature type="binding site" evidence="1">
    <location>
        <position position="167"/>
    </location>
    <ligand>
        <name>(2E)-4-hydroxy-3-methylbut-2-enyl diphosphate</name>
        <dbReference type="ChEBI" id="CHEBI:128753"/>
    </ligand>
</feature>
<feature type="binding site" evidence="1">
    <location>
        <position position="197"/>
    </location>
    <ligand>
        <name>[4Fe-4S] cluster</name>
        <dbReference type="ChEBI" id="CHEBI:49883"/>
    </ligand>
</feature>
<feature type="binding site" evidence="1">
    <location>
        <position position="225"/>
    </location>
    <ligand>
        <name>(2E)-4-hydroxy-3-methylbut-2-enyl diphosphate</name>
        <dbReference type="ChEBI" id="CHEBI:128753"/>
    </ligand>
</feature>
<feature type="binding site" evidence="1">
    <location>
        <position position="225"/>
    </location>
    <ligand>
        <name>dimethylallyl diphosphate</name>
        <dbReference type="ChEBI" id="CHEBI:57623"/>
    </ligand>
</feature>
<feature type="binding site" evidence="1">
    <location>
        <position position="225"/>
    </location>
    <ligand>
        <name>isopentenyl diphosphate</name>
        <dbReference type="ChEBI" id="CHEBI:128769"/>
    </ligand>
</feature>
<feature type="binding site" evidence="1">
    <location>
        <position position="226"/>
    </location>
    <ligand>
        <name>(2E)-4-hydroxy-3-methylbut-2-enyl diphosphate</name>
        <dbReference type="ChEBI" id="CHEBI:128753"/>
    </ligand>
</feature>
<feature type="binding site" evidence="1">
    <location>
        <position position="226"/>
    </location>
    <ligand>
        <name>dimethylallyl diphosphate</name>
        <dbReference type="ChEBI" id="CHEBI:57623"/>
    </ligand>
</feature>
<feature type="binding site" evidence="1">
    <location>
        <position position="226"/>
    </location>
    <ligand>
        <name>isopentenyl diphosphate</name>
        <dbReference type="ChEBI" id="CHEBI:128769"/>
    </ligand>
</feature>
<feature type="binding site" evidence="1">
    <location>
        <position position="227"/>
    </location>
    <ligand>
        <name>(2E)-4-hydroxy-3-methylbut-2-enyl diphosphate</name>
        <dbReference type="ChEBI" id="CHEBI:128753"/>
    </ligand>
</feature>
<feature type="binding site" evidence="1">
    <location>
        <position position="227"/>
    </location>
    <ligand>
        <name>dimethylallyl diphosphate</name>
        <dbReference type="ChEBI" id="CHEBI:57623"/>
    </ligand>
</feature>
<feature type="binding site" evidence="1">
    <location>
        <position position="227"/>
    </location>
    <ligand>
        <name>isopentenyl diphosphate</name>
        <dbReference type="ChEBI" id="CHEBI:128769"/>
    </ligand>
</feature>
<feature type="binding site" evidence="1">
    <location>
        <position position="269"/>
    </location>
    <ligand>
        <name>(2E)-4-hydroxy-3-methylbut-2-enyl diphosphate</name>
        <dbReference type="ChEBI" id="CHEBI:128753"/>
    </ligand>
</feature>
<feature type="binding site" evidence="1">
    <location>
        <position position="269"/>
    </location>
    <ligand>
        <name>dimethylallyl diphosphate</name>
        <dbReference type="ChEBI" id="CHEBI:57623"/>
    </ligand>
</feature>
<feature type="binding site" evidence="1">
    <location>
        <position position="269"/>
    </location>
    <ligand>
        <name>isopentenyl diphosphate</name>
        <dbReference type="ChEBI" id="CHEBI:128769"/>
    </ligand>
</feature>
<evidence type="ECO:0000255" key="1">
    <source>
        <dbReference type="HAMAP-Rule" id="MF_00191"/>
    </source>
</evidence>
<sequence>MKILLANPRGFCAGVSRAVETVEKVLEVEKSPVYVRHEVVHNKVVVDSLKKKGVVFVKEVDEVPDDAVCIFSAHGVSLQVEEAASKKNLVLYDATCPLVTKVHRGVRLASNNDAECVLIGHKGHPEVQGTMGQYRSEKGAIYLVESEQDVAKLDIKNPDNLYYATQTTLSVDETQGIIESLKNRFPNIKGPKKEDICYATQNRQTAIKSMLKEIDVLVVVGSQNSSNSNRLKELATLEGIDAYLVDNPADIKSTWFENKKVCGVSAGASAPEYLVQQVITEISRVCEGDVVVEEFDGIKEEVYFPLPRLLKQKIIGTN</sequence>
<accession>B0U064</accession>
<keyword id="KW-0004">4Fe-4S</keyword>
<keyword id="KW-0408">Iron</keyword>
<keyword id="KW-0411">Iron-sulfur</keyword>
<keyword id="KW-0414">Isoprene biosynthesis</keyword>
<keyword id="KW-0479">Metal-binding</keyword>
<keyword id="KW-0560">Oxidoreductase</keyword>
<organism>
    <name type="scientific">Francisella philomiragia subsp. philomiragia (strain ATCC 25017 / CCUG 19701 / FSC 153 / O#319-036)</name>
    <dbReference type="NCBI Taxonomy" id="484022"/>
    <lineage>
        <taxon>Bacteria</taxon>
        <taxon>Pseudomonadati</taxon>
        <taxon>Pseudomonadota</taxon>
        <taxon>Gammaproteobacteria</taxon>
        <taxon>Thiotrichales</taxon>
        <taxon>Francisellaceae</taxon>
        <taxon>Francisella</taxon>
    </lineage>
</organism>
<dbReference type="EC" id="1.17.7.4" evidence="1"/>
<dbReference type="EMBL" id="CP000937">
    <property type="protein sequence ID" value="ABZ86693.1"/>
    <property type="molecule type" value="Genomic_DNA"/>
</dbReference>
<dbReference type="SMR" id="B0U064"/>
<dbReference type="KEGG" id="fph:Fphi_0475"/>
<dbReference type="eggNOG" id="COG0761">
    <property type="taxonomic scope" value="Bacteria"/>
</dbReference>
<dbReference type="HOGENOM" id="CLU_027486_1_0_6"/>
<dbReference type="UniPathway" id="UPA00056">
    <property type="reaction ID" value="UER00097"/>
</dbReference>
<dbReference type="UniPathway" id="UPA00059">
    <property type="reaction ID" value="UER00105"/>
</dbReference>
<dbReference type="GO" id="GO:0051539">
    <property type="term" value="F:4 iron, 4 sulfur cluster binding"/>
    <property type="evidence" value="ECO:0007669"/>
    <property type="project" value="UniProtKB-UniRule"/>
</dbReference>
<dbReference type="GO" id="GO:0051745">
    <property type="term" value="F:4-hydroxy-3-methylbut-2-enyl diphosphate reductase activity"/>
    <property type="evidence" value="ECO:0007669"/>
    <property type="project" value="UniProtKB-UniRule"/>
</dbReference>
<dbReference type="GO" id="GO:0046872">
    <property type="term" value="F:metal ion binding"/>
    <property type="evidence" value="ECO:0007669"/>
    <property type="project" value="UniProtKB-KW"/>
</dbReference>
<dbReference type="GO" id="GO:0050992">
    <property type="term" value="P:dimethylallyl diphosphate biosynthetic process"/>
    <property type="evidence" value="ECO:0007669"/>
    <property type="project" value="UniProtKB-UniRule"/>
</dbReference>
<dbReference type="GO" id="GO:0019288">
    <property type="term" value="P:isopentenyl diphosphate biosynthetic process, methylerythritol 4-phosphate pathway"/>
    <property type="evidence" value="ECO:0007669"/>
    <property type="project" value="UniProtKB-UniRule"/>
</dbReference>
<dbReference type="GO" id="GO:0016114">
    <property type="term" value="P:terpenoid biosynthetic process"/>
    <property type="evidence" value="ECO:0007669"/>
    <property type="project" value="UniProtKB-UniRule"/>
</dbReference>
<dbReference type="CDD" id="cd13944">
    <property type="entry name" value="lytB_ispH"/>
    <property type="match status" value="1"/>
</dbReference>
<dbReference type="Gene3D" id="3.40.50.11270">
    <property type="match status" value="1"/>
</dbReference>
<dbReference type="Gene3D" id="3.40.1010.20">
    <property type="entry name" value="4-hydroxy-3-methylbut-2-enyl diphosphate reductase, catalytic domain"/>
    <property type="match status" value="2"/>
</dbReference>
<dbReference type="HAMAP" id="MF_00191">
    <property type="entry name" value="IspH"/>
    <property type="match status" value="1"/>
</dbReference>
<dbReference type="InterPro" id="IPR003451">
    <property type="entry name" value="LytB/IspH"/>
</dbReference>
<dbReference type="NCBIfam" id="TIGR00216">
    <property type="entry name" value="ispH_lytB"/>
    <property type="match status" value="1"/>
</dbReference>
<dbReference type="NCBIfam" id="NF002188">
    <property type="entry name" value="PRK01045.1-2"/>
    <property type="match status" value="1"/>
</dbReference>
<dbReference type="NCBIfam" id="NF002190">
    <property type="entry name" value="PRK01045.1-4"/>
    <property type="match status" value="1"/>
</dbReference>
<dbReference type="PANTHER" id="PTHR30426">
    <property type="entry name" value="4-HYDROXY-3-METHYLBUT-2-ENYL DIPHOSPHATE REDUCTASE"/>
    <property type="match status" value="1"/>
</dbReference>
<dbReference type="PANTHER" id="PTHR30426:SF0">
    <property type="entry name" value="4-HYDROXY-3-METHYLBUT-2-ENYL DIPHOSPHATE REDUCTASE"/>
    <property type="match status" value="1"/>
</dbReference>
<dbReference type="Pfam" id="PF02401">
    <property type="entry name" value="LYTB"/>
    <property type="match status" value="1"/>
</dbReference>
<name>ISPH_FRAP2</name>
<comment type="function">
    <text evidence="1">Catalyzes the conversion of 1-hydroxy-2-methyl-2-(E)-butenyl 4-diphosphate (HMBPP) into a mixture of isopentenyl diphosphate (IPP) and dimethylallyl diphosphate (DMAPP). Acts in the terminal step of the DOXP/MEP pathway for isoprenoid precursor biosynthesis.</text>
</comment>
<comment type="catalytic activity">
    <reaction evidence="1">
        <text>isopentenyl diphosphate + 2 oxidized [2Fe-2S]-[ferredoxin] + H2O = (2E)-4-hydroxy-3-methylbut-2-enyl diphosphate + 2 reduced [2Fe-2S]-[ferredoxin] + 2 H(+)</text>
        <dbReference type="Rhea" id="RHEA:24488"/>
        <dbReference type="Rhea" id="RHEA-COMP:10000"/>
        <dbReference type="Rhea" id="RHEA-COMP:10001"/>
        <dbReference type="ChEBI" id="CHEBI:15377"/>
        <dbReference type="ChEBI" id="CHEBI:15378"/>
        <dbReference type="ChEBI" id="CHEBI:33737"/>
        <dbReference type="ChEBI" id="CHEBI:33738"/>
        <dbReference type="ChEBI" id="CHEBI:128753"/>
        <dbReference type="ChEBI" id="CHEBI:128769"/>
        <dbReference type="EC" id="1.17.7.4"/>
    </reaction>
</comment>
<comment type="catalytic activity">
    <reaction evidence="1">
        <text>dimethylallyl diphosphate + 2 oxidized [2Fe-2S]-[ferredoxin] + H2O = (2E)-4-hydroxy-3-methylbut-2-enyl diphosphate + 2 reduced [2Fe-2S]-[ferredoxin] + 2 H(+)</text>
        <dbReference type="Rhea" id="RHEA:24825"/>
        <dbReference type="Rhea" id="RHEA-COMP:10000"/>
        <dbReference type="Rhea" id="RHEA-COMP:10001"/>
        <dbReference type="ChEBI" id="CHEBI:15377"/>
        <dbReference type="ChEBI" id="CHEBI:15378"/>
        <dbReference type="ChEBI" id="CHEBI:33737"/>
        <dbReference type="ChEBI" id="CHEBI:33738"/>
        <dbReference type="ChEBI" id="CHEBI:57623"/>
        <dbReference type="ChEBI" id="CHEBI:128753"/>
        <dbReference type="EC" id="1.17.7.4"/>
    </reaction>
</comment>
<comment type="cofactor">
    <cofactor evidence="1">
        <name>[4Fe-4S] cluster</name>
        <dbReference type="ChEBI" id="CHEBI:49883"/>
    </cofactor>
    <text evidence="1">Binds 1 [4Fe-4S] cluster per subunit.</text>
</comment>
<comment type="pathway">
    <text evidence="1">Isoprenoid biosynthesis; dimethylallyl diphosphate biosynthesis; dimethylallyl diphosphate from (2E)-4-hydroxy-3-methylbutenyl diphosphate: step 1/1.</text>
</comment>
<comment type="pathway">
    <text evidence="1">Isoprenoid biosynthesis; isopentenyl diphosphate biosynthesis via DXP pathway; isopentenyl diphosphate from 1-deoxy-D-xylulose 5-phosphate: step 6/6.</text>
</comment>
<comment type="similarity">
    <text evidence="1">Belongs to the IspH family.</text>
</comment>